<protein>
    <recommendedName>
        <fullName>Probable arabinan endo-1,5-alpha-L-arabinosidase C</fullName>
        <ecNumber>3.2.1.99</ecNumber>
    </recommendedName>
    <alternativeName>
        <fullName>Endo-1,5-alpha-L-arabinanase C</fullName>
        <shortName>ABN C</shortName>
    </alternativeName>
</protein>
<sequence length="320" mass="35390">MYRSTLLFLFIALVNAFANPGPCTGDCWTHDPGLYQRKSDGRYFRFATGGGIHISSAPAIVGPWEDNGFALPNGSKINHAGNDNLWAPDVHYQENTKKYYMYYSVSVLGKKDSVIGVASSDTMEVGSWTDHGSIGLNTSNNPPYNTIDANWIRIDGAPALNFGSYWQGIFQVPLKNPFELAEIAPHQIAWNASLNHRIEAAFEFKHGNYYYLTFSSGLGGNYDVNLPAQGEEYSIHVCRSEGGRNNFVDKSGRSCRESGGTTLLASHGNVYAPGGQGIVEDKNLGQVLYYHYADKTKGLAKTDYQFGWNRLNWVDGWPSV</sequence>
<proteinExistence type="inferred from homology"/>
<dbReference type="EC" id="3.2.1.99"/>
<dbReference type="EMBL" id="CH476598">
    <property type="protein sequence ID" value="EAU35490.1"/>
    <property type="molecule type" value="Genomic_DNA"/>
</dbReference>
<dbReference type="RefSeq" id="XP_001212866.1">
    <property type="nucleotide sequence ID" value="XM_001212866.1"/>
</dbReference>
<dbReference type="SMR" id="Q0CRJ6"/>
<dbReference type="STRING" id="341663.Q0CRJ6"/>
<dbReference type="GlyCosmos" id="Q0CRJ6">
    <property type="glycosylation" value="3 sites, No reported glycans"/>
</dbReference>
<dbReference type="EnsemblFungi" id="EAU35490">
    <property type="protein sequence ID" value="EAU35490"/>
    <property type="gene ID" value="ATEG_03688"/>
</dbReference>
<dbReference type="GeneID" id="4318802"/>
<dbReference type="VEuPathDB" id="FungiDB:ATEG_03688"/>
<dbReference type="eggNOG" id="ENOG502QTQG">
    <property type="taxonomic scope" value="Eukaryota"/>
</dbReference>
<dbReference type="HOGENOM" id="CLU_009397_5_0_1"/>
<dbReference type="OMA" id="EDYQFGW"/>
<dbReference type="OrthoDB" id="195678at2759"/>
<dbReference type="UniPathway" id="UPA00667"/>
<dbReference type="Proteomes" id="UP000007963">
    <property type="component" value="Unassembled WGS sequence"/>
</dbReference>
<dbReference type="GO" id="GO:0005576">
    <property type="term" value="C:extracellular region"/>
    <property type="evidence" value="ECO:0007669"/>
    <property type="project" value="UniProtKB-SubCell"/>
</dbReference>
<dbReference type="GO" id="GO:0046558">
    <property type="term" value="F:arabinan endo-1,5-alpha-L-arabinosidase activity"/>
    <property type="evidence" value="ECO:0007669"/>
    <property type="project" value="UniProtKB-EC"/>
</dbReference>
<dbReference type="GO" id="GO:0031222">
    <property type="term" value="P:arabinan catabolic process"/>
    <property type="evidence" value="ECO:0007669"/>
    <property type="project" value="UniProtKB-UniPathway"/>
</dbReference>
<dbReference type="GO" id="GO:0045493">
    <property type="term" value="P:xylan catabolic process"/>
    <property type="evidence" value="ECO:0007669"/>
    <property type="project" value="UniProtKB-KW"/>
</dbReference>
<dbReference type="CDD" id="cd18831">
    <property type="entry name" value="GH43_AnAbnA-like"/>
    <property type="match status" value="1"/>
</dbReference>
<dbReference type="Gene3D" id="2.115.10.20">
    <property type="entry name" value="Glycosyl hydrolase domain, family 43"/>
    <property type="match status" value="1"/>
</dbReference>
<dbReference type="InterPro" id="IPR050727">
    <property type="entry name" value="GH43_arabinanases"/>
</dbReference>
<dbReference type="InterPro" id="IPR006710">
    <property type="entry name" value="Glyco_hydro_43"/>
</dbReference>
<dbReference type="InterPro" id="IPR016840">
    <property type="entry name" value="Glyco_hydro_43_endo_a_Ara-ase"/>
</dbReference>
<dbReference type="InterPro" id="IPR023296">
    <property type="entry name" value="Glyco_hydro_beta-prop_sf"/>
</dbReference>
<dbReference type="PANTHER" id="PTHR43301">
    <property type="entry name" value="ARABINAN ENDO-1,5-ALPHA-L-ARABINOSIDASE"/>
    <property type="match status" value="1"/>
</dbReference>
<dbReference type="PANTHER" id="PTHR43301:SF7">
    <property type="entry name" value="ARABINAN ENDO-1,5-ALPHA-L-ARABINOSIDASE C"/>
    <property type="match status" value="1"/>
</dbReference>
<dbReference type="Pfam" id="PF04616">
    <property type="entry name" value="Glyco_hydro_43"/>
    <property type="match status" value="1"/>
</dbReference>
<dbReference type="PIRSF" id="PIRSF026534">
    <property type="entry name" value="Endo_alpha-L-arabinosidase"/>
    <property type="match status" value="1"/>
</dbReference>
<dbReference type="SUPFAM" id="SSF75005">
    <property type="entry name" value="Arabinanase/levansucrase/invertase"/>
    <property type="match status" value="1"/>
</dbReference>
<comment type="function">
    <text evidence="1">Endo-1,5-alpha-L-arabinanase involved in degradation of pectin. Its preferred substrate is linear 1,5-alpha-L-arabinan (By similarity).</text>
</comment>
<comment type="catalytic activity">
    <reaction>
        <text>Endohydrolysis of (1-&gt;5)-alpha-arabinofuranosidic linkages in (1-&gt;5)-arabinans.</text>
        <dbReference type="EC" id="3.2.1.99"/>
    </reaction>
</comment>
<comment type="pathway">
    <text>Glycan metabolism; L-arabinan degradation.</text>
</comment>
<comment type="subcellular location">
    <subcellularLocation>
        <location evidence="1">Secreted</location>
    </subcellularLocation>
</comment>
<comment type="similarity">
    <text evidence="4">Belongs to the glycosyl hydrolase 43 family.</text>
</comment>
<feature type="signal peptide" evidence="3">
    <location>
        <begin position="1"/>
        <end position="16"/>
    </location>
</feature>
<feature type="chain" id="PRO_0000394637" description="Probable arabinan endo-1,5-alpha-L-arabinosidase C">
    <location>
        <begin position="17"/>
        <end position="320"/>
    </location>
</feature>
<feature type="active site" description="Proton acceptor" evidence="2">
    <location>
        <position position="31"/>
    </location>
</feature>
<feature type="active site" description="Proton donor" evidence="2">
    <location>
        <position position="199"/>
    </location>
</feature>
<feature type="site" description="Important for catalytic activity, responsible for pKa modulation of the active site Glu and correct orientation of both the proton donor and substrate" evidence="2">
    <location>
        <position position="148"/>
    </location>
</feature>
<feature type="glycosylation site" description="N-linked (GlcNAc...) asparagine" evidence="3">
    <location>
        <position position="73"/>
    </location>
</feature>
<feature type="glycosylation site" description="N-linked (GlcNAc...) asparagine" evidence="3">
    <location>
        <position position="137"/>
    </location>
</feature>
<feature type="glycosylation site" description="N-linked (GlcNAc...) asparagine" evidence="3">
    <location>
        <position position="191"/>
    </location>
</feature>
<keyword id="KW-0119">Carbohydrate metabolism</keyword>
<keyword id="KW-0325">Glycoprotein</keyword>
<keyword id="KW-0326">Glycosidase</keyword>
<keyword id="KW-0378">Hydrolase</keyword>
<keyword id="KW-0624">Polysaccharide degradation</keyword>
<keyword id="KW-1185">Reference proteome</keyword>
<keyword id="KW-0964">Secreted</keyword>
<keyword id="KW-0732">Signal</keyword>
<keyword id="KW-0858">Xylan degradation</keyword>
<evidence type="ECO:0000250" key="1"/>
<evidence type="ECO:0000250" key="2">
    <source>
        <dbReference type="UniProtKB" id="P94522"/>
    </source>
</evidence>
<evidence type="ECO:0000255" key="3"/>
<evidence type="ECO:0000305" key="4"/>
<organism>
    <name type="scientific">Aspergillus terreus (strain NIH 2624 / FGSC A1156)</name>
    <dbReference type="NCBI Taxonomy" id="341663"/>
    <lineage>
        <taxon>Eukaryota</taxon>
        <taxon>Fungi</taxon>
        <taxon>Dikarya</taxon>
        <taxon>Ascomycota</taxon>
        <taxon>Pezizomycotina</taxon>
        <taxon>Eurotiomycetes</taxon>
        <taxon>Eurotiomycetidae</taxon>
        <taxon>Eurotiales</taxon>
        <taxon>Aspergillaceae</taxon>
        <taxon>Aspergillus</taxon>
        <taxon>Aspergillus subgen. Circumdati</taxon>
    </lineage>
</organism>
<gene>
    <name type="primary">abnC</name>
    <name type="ORF">ATEG_03688</name>
</gene>
<name>ABNC_ASPTN</name>
<accession>Q0CRJ6</accession>
<reference key="1">
    <citation type="submission" date="2005-09" db="EMBL/GenBank/DDBJ databases">
        <title>Annotation of the Aspergillus terreus NIH2624 genome.</title>
        <authorList>
            <person name="Birren B.W."/>
            <person name="Lander E.S."/>
            <person name="Galagan J.E."/>
            <person name="Nusbaum C."/>
            <person name="Devon K."/>
            <person name="Henn M."/>
            <person name="Ma L.-J."/>
            <person name="Jaffe D.B."/>
            <person name="Butler J."/>
            <person name="Alvarez P."/>
            <person name="Gnerre S."/>
            <person name="Grabherr M."/>
            <person name="Kleber M."/>
            <person name="Mauceli E.W."/>
            <person name="Brockman W."/>
            <person name="Rounsley S."/>
            <person name="Young S.K."/>
            <person name="LaButti K."/>
            <person name="Pushparaj V."/>
            <person name="DeCaprio D."/>
            <person name="Crawford M."/>
            <person name="Koehrsen M."/>
            <person name="Engels R."/>
            <person name="Montgomery P."/>
            <person name="Pearson M."/>
            <person name="Howarth C."/>
            <person name="Larson L."/>
            <person name="Luoma S."/>
            <person name="White J."/>
            <person name="Alvarado L."/>
            <person name="Kodira C.D."/>
            <person name="Zeng Q."/>
            <person name="Oleary S."/>
            <person name="Yandava C."/>
            <person name="Denning D.W."/>
            <person name="Nierman W.C."/>
            <person name="Milne T."/>
            <person name="Madden K."/>
        </authorList>
    </citation>
    <scope>NUCLEOTIDE SEQUENCE [LARGE SCALE GENOMIC DNA]</scope>
    <source>
        <strain>NIH 2624 / FGSC A1156</strain>
    </source>
</reference>